<keyword id="KW-0963">Cytoplasm</keyword>
<keyword id="KW-0227">DNA damage</keyword>
<keyword id="KW-0233">DNA recombination</keyword>
<keyword id="KW-0234">DNA repair</keyword>
<keyword id="KW-0238">DNA-binding</keyword>
<keyword id="KW-0255">Endonuclease</keyword>
<keyword id="KW-0378">Hydrolase</keyword>
<keyword id="KW-0460">Magnesium</keyword>
<keyword id="KW-0479">Metal-binding</keyword>
<keyword id="KW-0540">Nuclease</keyword>
<comment type="function">
    <text evidence="1">The RuvA-RuvB-RuvC complex processes Holliday junction (HJ) DNA during genetic recombination and DNA repair. Endonuclease that resolves HJ intermediates. Cleaves cruciform DNA by making single-stranded nicks across the HJ at symmetrical positions within the homologous arms, yielding a 5'-phosphate and a 3'-hydroxyl group; requires a central core of homology in the junction. The consensus cleavage sequence is 5'-(A/T)TT(C/G)-3'. Cleavage occurs on the 3'-side of the TT dinucleotide at the point of strand exchange. HJ branch migration catalyzed by RuvA-RuvB allows RuvC to scan DNA until it finds its consensus sequence, where it cleaves and resolves the cruciform DNA.</text>
</comment>
<comment type="catalytic activity">
    <reaction evidence="1">
        <text>Endonucleolytic cleavage at a junction such as a reciprocal single-stranded crossover between two homologous DNA duplexes (Holliday junction).</text>
        <dbReference type="EC" id="3.1.21.10"/>
    </reaction>
</comment>
<comment type="cofactor">
    <cofactor evidence="1">
        <name>Mg(2+)</name>
        <dbReference type="ChEBI" id="CHEBI:18420"/>
    </cofactor>
    <text evidence="1">Binds 2 Mg(2+) ion per subunit.</text>
</comment>
<comment type="subunit">
    <text evidence="1">Homodimer which binds Holliday junction (HJ) DNA. The HJ becomes 2-fold symmetrical on binding to RuvC with unstacked arms; it has a different conformation from HJ DNA in complex with RuvA. In the full resolvosome a probable DNA-RuvA(4)-RuvB(12)-RuvC(2) complex forms which resolves the HJ.</text>
</comment>
<comment type="subcellular location">
    <subcellularLocation>
        <location evidence="1">Cytoplasm</location>
    </subcellularLocation>
</comment>
<comment type="similarity">
    <text evidence="1">Belongs to the RuvC family.</text>
</comment>
<proteinExistence type="inferred from homology"/>
<gene>
    <name evidence="1" type="primary">ruvC</name>
    <name type="ordered locus">PSPPH_3774</name>
</gene>
<dbReference type="EC" id="3.1.21.10" evidence="1"/>
<dbReference type="EMBL" id="CP000058">
    <property type="protein sequence ID" value="AAZ37868.1"/>
    <property type="molecule type" value="Genomic_DNA"/>
</dbReference>
<dbReference type="RefSeq" id="WP_004657902.1">
    <property type="nucleotide sequence ID" value="NC_005773.3"/>
</dbReference>
<dbReference type="SMR" id="Q48FC3"/>
<dbReference type="GeneID" id="73734551"/>
<dbReference type="KEGG" id="psp:PSPPH_3774"/>
<dbReference type="eggNOG" id="COG0817">
    <property type="taxonomic scope" value="Bacteria"/>
</dbReference>
<dbReference type="HOGENOM" id="CLU_091257_2_1_6"/>
<dbReference type="Proteomes" id="UP000000551">
    <property type="component" value="Chromosome"/>
</dbReference>
<dbReference type="GO" id="GO:0005737">
    <property type="term" value="C:cytoplasm"/>
    <property type="evidence" value="ECO:0007669"/>
    <property type="project" value="UniProtKB-SubCell"/>
</dbReference>
<dbReference type="GO" id="GO:0048476">
    <property type="term" value="C:Holliday junction resolvase complex"/>
    <property type="evidence" value="ECO:0007669"/>
    <property type="project" value="UniProtKB-UniRule"/>
</dbReference>
<dbReference type="GO" id="GO:0008821">
    <property type="term" value="F:crossover junction DNA endonuclease activity"/>
    <property type="evidence" value="ECO:0007669"/>
    <property type="project" value="UniProtKB-UniRule"/>
</dbReference>
<dbReference type="GO" id="GO:0003677">
    <property type="term" value="F:DNA binding"/>
    <property type="evidence" value="ECO:0007669"/>
    <property type="project" value="UniProtKB-KW"/>
</dbReference>
<dbReference type="GO" id="GO:0000287">
    <property type="term" value="F:magnesium ion binding"/>
    <property type="evidence" value="ECO:0007669"/>
    <property type="project" value="UniProtKB-UniRule"/>
</dbReference>
<dbReference type="GO" id="GO:0006310">
    <property type="term" value="P:DNA recombination"/>
    <property type="evidence" value="ECO:0007669"/>
    <property type="project" value="UniProtKB-UniRule"/>
</dbReference>
<dbReference type="GO" id="GO:0006281">
    <property type="term" value="P:DNA repair"/>
    <property type="evidence" value="ECO:0007669"/>
    <property type="project" value="UniProtKB-UniRule"/>
</dbReference>
<dbReference type="CDD" id="cd16962">
    <property type="entry name" value="RuvC"/>
    <property type="match status" value="1"/>
</dbReference>
<dbReference type="FunFam" id="3.30.420.10:FF:000002">
    <property type="entry name" value="Crossover junction endodeoxyribonuclease RuvC"/>
    <property type="match status" value="1"/>
</dbReference>
<dbReference type="Gene3D" id="3.30.420.10">
    <property type="entry name" value="Ribonuclease H-like superfamily/Ribonuclease H"/>
    <property type="match status" value="1"/>
</dbReference>
<dbReference type="HAMAP" id="MF_00034">
    <property type="entry name" value="RuvC"/>
    <property type="match status" value="1"/>
</dbReference>
<dbReference type="InterPro" id="IPR012337">
    <property type="entry name" value="RNaseH-like_sf"/>
</dbReference>
<dbReference type="InterPro" id="IPR036397">
    <property type="entry name" value="RNaseH_sf"/>
</dbReference>
<dbReference type="InterPro" id="IPR020563">
    <property type="entry name" value="X-over_junc_endoDNase_Mg_BS"/>
</dbReference>
<dbReference type="InterPro" id="IPR002176">
    <property type="entry name" value="X-over_junc_endoDNase_RuvC"/>
</dbReference>
<dbReference type="NCBIfam" id="TIGR00228">
    <property type="entry name" value="ruvC"/>
    <property type="match status" value="1"/>
</dbReference>
<dbReference type="PANTHER" id="PTHR30194">
    <property type="entry name" value="CROSSOVER JUNCTION ENDODEOXYRIBONUCLEASE RUVC"/>
    <property type="match status" value="1"/>
</dbReference>
<dbReference type="PANTHER" id="PTHR30194:SF3">
    <property type="entry name" value="CROSSOVER JUNCTION ENDODEOXYRIBONUCLEASE RUVC"/>
    <property type="match status" value="1"/>
</dbReference>
<dbReference type="Pfam" id="PF02075">
    <property type="entry name" value="RuvC"/>
    <property type="match status" value="1"/>
</dbReference>
<dbReference type="PRINTS" id="PR00696">
    <property type="entry name" value="RSOLVASERUVC"/>
</dbReference>
<dbReference type="SUPFAM" id="SSF53098">
    <property type="entry name" value="Ribonuclease H-like"/>
    <property type="match status" value="1"/>
</dbReference>
<dbReference type="PROSITE" id="PS01321">
    <property type="entry name" value="RUVC"/>
    <property type="match status" value="1"/>
</dbReference>
<feature type="chain" id="PRO_0000225166" description="Crossover junction endodeoxyribonuclease RuvC">
    <location>
        <begin position="1"/>
        <end position="174"/>
    </location>
</feature>
<feature type="active site" evidence="1">
    <location>
        <position position="8"/>
    </location>
</feature>
<feature type="active site" evidence="1">
    <location>
        <position position="67"/>
    </location>
</feature>
<feature type="active site" evidence="1">
    <location>
        <position position="139"/>
    </location>
</feature>
<feature type="binding site" evidence="1">
    <location>
        <position position="8"/>
    </location>
    <ligand>
        <name>Mg(2+)</name>
        <dbReference type="ChEBI" id="CHEBI:18420"/>
        <label>1</label>
    </ligand>
</feature>
<feature type="binding site" evidence="1">
    <location>
        <position position="67"/>
    </location>
    <ligand>
        <name>Mg(2+)</name>
        <dbReference type="ChEBI" id="CHEBI:18420"/>
        <label>2</label>
    </ligand>
</feature>
<feature type="binding site" evidence="1">
    <location>
        <position position="139"/>
    </location>
    <ligand>
        <name>Mg(2+)</name>
        <dbReference type="ChEBI" id="CHEBI:18420"/>
        <label>1</label>
    </ligand>
</feature>
<sequence length="174" mass="18473">MTLILGIDPGSRITGYGVVRDTGRGCVYVASGCIRTGSGELHERLQIVYRGVREVIKTYGPVTMGIEKVFMARNADSALKLGQARGAAIVAGAEEALEIAEYTATQVKQAVAGTGGANKEQVMMMVMHLLKLTQKPQIDASDALAIALCHAHTRSSLIPHGLSTARSRGGRLRL</sequence>
<evidence type="ECO:0000255" key="1">
    <source>
        <dbReference type="HAMAP-Rule" id="MF_00034"/>
    </source>
</evidence>
<organism>
    <name type="scientific">Pseudomonas savastanoi pv. phaseolicola (strain 1448A / Race 6)</name>
    <name type="common">Pseudomonas syringae pv. phaseolicola (strain 1448A / Race 6)</name>
    <dbReference type="NCBI Taxonomy" id="264730"/>
    <lineage>
        <taxon>Bacteria</taxon>
        <taxon>Pseudomonadati</taxon>
        <taxon>Pseudomonadota</taxon>
        <taxon>Gammaproteobacteria</taxon>
        <taxon>Pseudomonadales</taxon>
        <taxon>Pseudomonadaceae</taxon>
        <taxon>Pseudomonas</taxon>
    </lineage>
</organism>
<name>RUVC_PSE14</name>
<protein>
    <recommendedName>
        <fullName evidence="1">Crossover junction endodeoxyribonuclease RuvC</fullName>
        <ecNumber evidence="1">3.1.21.10</ecNumber>
    </recommendedName>
    <alternativeName>
        <fullName evidence="1">Holliday junction nuclease RuvC</fullName>
    </alternativeName>
    <alternativeName>
        <fullName evidence="1">Holliday junction resolvase RuvC</fullName>
    </alternativeName>
</protein>
<accession>Q48FC3</accession>
<reference key="1">
    <citation type="journal article" date="2005" name="J. Bacteriol.">
        <title>Whole-genome sequence analysis of Pseudomonas syringae pv. phaseolicola 1448A reveals divergence among pathovars in genes involved in virulence and transposition.</title>
        <authorList>
            <person name="Joardar V."/>
            <person name="Lindeberg M."/>
            <person name="Jackson R.W."/>
            <person name="Selengut J."/>
            <person name="Dodson R."/>
            <person name="Brinkac L.M."/>
            <person name="Daugherty S.C."/>
            <person name="DeBoy R.T."/>
            <person name="Durkin A.S."/>
            <person name="Gwinn Giglio M."/>
            <person name="Madupu R."/>
            <person name="Nelson W.C."/>
            <person name="Rosovitz M.J."/>
            <person name="Sullivan S.A."/>
            <person name="Crabtree J."/>
            <person name="Creasy T."/>
            <person name="Davidsen T.M."/>
            <person name="Haft D.H."/>
            <person name="Zafar N."/>
            <person name="Zhou L."/>
            <person name="Halpin R."/>
            <person name="Holley T."/>
            <person name="Khouri H.M."/>
            <person name="Feldblyum T.V."/>
            <person name="White O."/>
            <person name="Fraser C.M."/>
            <person name="Chatterjee A.K."/>
            <person name="Cartinhour S."/>
            <person name="Schneider D."/>
            <person name="Mansfield J.W."/>
            <person name="Collmer A."/>
            <person name="Buell R."/>
        </authorList>
    </citation>
    <scope>NUCLEOTIDE SEQUENCE [LARGE SCALE GENOMIC DNA]</scope>
    <source>
        <strain>1448A / Race 6</strain>
    </source>
</reference>